<name>AROA_SACI1</name>
<organism>
    <name type="scientific">Saccharolobus islandicus (strain Y.N.15.51 / Yellowstone #2)</name>
    <name type="common">Sulfolobus islandicus</name>
    <dbReference type="NCBI Taxonomy" id="419942"/>
    <lineage>
        <taxon>Archaea</taxon>
        <taxon>Thermoproteota</taxon>
        <taxon>Thermoprotei</taxon>
        <taxon>Sulfolobales</taxon>
        <taxon>Sulfolobaceae</taxon>
        <taxon>Saccharolobus</taxon>
    </lineage>
</organism>
<feature type="chain" id="PRO_1000204175" description="3-phosphoshikimate 1-carboxyvinyltransferase">
    <location>
        <begin position="1"/>
        <end position="414"/>
    </location>
</feature>
<feature type="active site" description="Proton acceptor" evidence="1">
    <location>
        <position position="296"/>
    </location>
</feature>
<feature type="binding site" evidence="1">
    <location>
        <position position="20"/>
    </location>
    <ligand>
        <name>3-phosphoshikimate</name>
        <dbReference type="ChEBI" id="CHEBI:145989"/>
    </ligand>
</feature>
<feature type="binding site" evidence="1">
    <location>
        <position position="20"/>
    </location>
    <ligand>
        <name>phosphoenolpyruvate</name>
        <dbReference type="ChEBI" id="CHEBI:58702"/>
    </ligand>
</feature>
<feature type="binding site" evidence="1">
    <location>
        <position position="21"/>
    </location>
    <ligand>
        <name>3-phosphoshikimate</name>
        <dbReference type="ChEBI" id="CHEBI:145989"/>
    </ligand>
</feature>
<feature type="binding site" evidence="1">
    <location>
        <position position="25"/>
    </location>
    <ligand>
        <name>3-phosphoshikimate</name>
        <dbReference type="ChEBI" id="CHEBI:145989"/>
    </ligand>
</feature>
<feature type="binding site" evidence="1">
    <location>
        <position position="85"/>
    </location>
    <ligand>
        <name>phosphoenolpyruvate</name>
        <dbReference type="ChEBI" id="CHEBI:58702"/>
    </ligand>
</feature>
<feature type="binding site" evidence="1">
    <location>
        <position position="113"/>
    </location>
    <ligand>
        <name>phosphoenolpyruvate</name>
        <dbReference type="ChEBI" id="CHEBI:58702"/>
    </ligand>
</feature>
<feature type="binding site" evidence="1">
    <location>
        <position position="154"/>
    </location>
    <ligand>
        <name>3-phosphoshikimate</name>
        <dbReference type="ChEBI" id="CHEBI:145989"/>
    </ligand>
</feature>
<feature type="binding site" evidence="1">
    <location>
        <position position="155"/>
    </location>
    <ligand>
        <name>3-phosphoshikimate</name>
        <dbReference type="ChEBI" id="CHEBI:145989"/>
    </ligand>
</feature>
<feature type="binding site" evidence="1">
    <location>
        <position position="156"/>
    </location>
    <ligand>
        <name>3-phosphoshikimate</name>
        <dbReference type="ChEBI" id="CHEBI:145989"/>
    </ligand>
</feature>
<feature type="binding site" evidence="1">
    <location>
        <position position="156"/>
    </location>
    <ligand>
        <name>phosphoenolpyruvate</name>
        <dbReference type="ChEBI" id="CHEBI:58702"/>
    </ligand>
</feature>
<feature type="binding site" evidence="1">
    <location>
        <position position="181"/>
    </location>
    <ligand>
        <name>3-phosphoshikimate</name>
        <dbReference type="ChEBI" id="CHEBI:145989"/>
    </ligand>
</feature>
<feature type="binding site" evidence="1">
    <location>
        <position position="296"/>
    </location>
    <ligand>
        <name>3-phosphoshikimate</name>
        <dbReference type="ChEBI" id="CHEBI:145989"/>
    </ligand>
</feature>
<feature type="binding site" evidence="1">
    <location>
        <position position="323"/>
    </location>
    <ligand>
        <name>3-phosphoshikimate</name>
        <dbReference type="ChEBI" id="CHEBI:145989"/>
    </ligand>
</feature>
<feature type="binding site" evidence="1">
    <location>
        <position position="327"/>
    </location>
    <ligand>
        <name>phosphoenolpyruvate</name>
        <dbReference type="ChEBI" id="CHEBI:58702"/>
    </ligand>
</feature>
<feature type="binding site" evidence="1">
    <location>
        <position position="371"/>
    </location>
    <ligand>
        <name>phosphoenolpyruvate</name>
        <dbReference type="ChEBI" id="CHEBI:58702"/>
    </ligand>
</feature>
<feature type="binding site" evidence="1">
    <location>
        <position position="395"/>
    </location>
    <ligand>
        <name>phosphoenolpyruvate</name>
        <dbReference type="ChEBI" id="CHEBI:58702"/>
    </ligand>
</feature>
<sequence length="414" mass="45308">MIVRIYPSEISGTIKAPQSKSLAIRLIFLSLFTRIHLHNLVLSEDVIDAINSVRALGVEVKNNSEFIPPEKLEIKKKFIKLKGSGTTLRMLIPIVAAIGGEVTIDAEESLRRRPLKRIVEALSNYGISFSSSSLPLTITGKLSSYNIKISGDESSQYISGLIYALHILNGGSIEILPPISSKSYILLTVDLFNRFGSNVKFYGNKIHINPNNLVEFQGEVAGDYGLASFYALSALVSGGRTTIVNLWEPKEYFGDHSIVKILKEMGATSEYLDGKWYVEAKDKYSSIKVNIDDAPDLAMTIAGLAAIAEGTSEITGIERLRIKESDRIESIRKVLGLYGVGSEVKSNSILIFGINKRMLSSPITDCLNDHRVAMMSSALALVNGGVITSAECVSKSNPNYWQDLLSLNAKISIE</sequence>
<comment type="function">
    <text evidence="1">Catalyzes the transfer of the enolpyruvyl moiety of phosphoenolpyruvate (PEP) to the 5-hydroxyl of shikimate-3-phosphate (S3P) to produce enolpyruvyl shikimate-3-phosphate and inorganic phosphate.</text>
</comment>
<comment type="catalytic activity">
    <reaction evidence="1">
        <text>3-phosphoshikimate + phosphoenolpyruvate = 5-O-(1-carboxyvinyl)-3-phosphoshikimate + phosphate</text>
        <dbReference type="Rhea" id="RHEA:21256"/>
        <dbReference type="ChEBI" id="CHEBI:43474"/>
        <dbReference type="ChEBI" id="CHEBI:57701"/>
        <dbReference type="ChEBI" id="CHEBI:58702"/>
        <dbReference type="ChEBI" id="CHEBI:145989"/>
        <dbReference type="EC" id="2.5.1.19"/>
    </reaction>
    <physiologicalReaction direction="left-to-right" evidence="1">
        <dbReference type="Rhea" id="RHEA:21257"/>
    </physiologicalReaction>
</comment>
<comment type="pathway">
    <text evidence="1">Metabolic intermediate biosynthesis; chorismate biosynthesis.</text>
</comment>
<comment type="subunit">
    <text evidence="1">Monomer.</text>
</comment>
<comment type="subcellular location">
    <subcellularLocation>
        <location evidence="1">Cytoplasm</location>
    </subcellularLocation>
</comment>
<comment type="similarity">
    <text evidence="1">Belongs to the EPSP synthase family.</text>
</comment>
<proteinExistence type="inferred from homology"/>
<accession>C3NG04</accession>
<keyword id="KW-0028">Amino-acid biosynthesis</keyword>
<keyword id="KW-0057">Aromatic amino acid biosynthesis</keyword>
<keyword id="KW-0963">Cytoplasm</keyword>
<keyword id="KW-0808">Transferase</keyword>
<evidence type="ECO:0000255" key="1">
    <source>
        <dbReference type="HAMAP-Rule" id="MF_00210"/>
    </source>
</evidence>
<reference key="1">
    <citation type="journal article" date="2009" name="Proc. Natl. Acad. Sci. U.S.A.">
        <title>Biogeography of the Sulfolobus islandicus pan-genome.</title>
        <authorList>
            <person name="Reno M.L."/>
            <person name="Held N.L."/>
            <person name="Fields C.J."/>
            <person name="Burke P.V."/>
            <person name="Whitaker R.J."/>
        </authorList>
    </citation>
    <scope>NUCLEOTIDE SEQUENCE [LARGE SCALE GENOMIC DNA]</scope>
    <source>
        <strain>Y.N.15.51 / Yellowstone #2</strain>
    </source>
</reference>
<dbReference type="EC" id="2.5.1.19" evidence="1"/>
<dbReference type="EMBL" id="CP001404">
    <property type="protein sequence ID" value="ACP48122.1"/>
    <property type="molecule type" value="Genomic_DNA"/>
</dbReference>
<dbReference type="RefSeq" id="WP_012713987.1">
    <property type="nucleotide sequence ID" value="NC_012623.1"/>
</dbReference>
<dbReference type="SMR" id="C3NG04"/>
<dbReference type="GeneID" id="7809627"/>
<dbReference type="KEGG" id="sin:YN1551_1015"/>
<dbReference type="HOGENOM" id="CLU_024321_0_0_2"/>
<dbReference type="UniPathway" id="UPA00053"/>
<dbReference type="Proteomes" id="UP000006818">
    <property type="component" value="Chromosome"/>
</dbReference>
<dbReference type="GO" id="GO:0005737">
    <property type="term" value="C:cytoplasm"/>
    <property type="evidence" value="ECO:0007669"/>
    <property type="project" value="UniProtKB-SubCell"/>
</dbReference>
<dbReference type="GO" id="GO:0003866">
    <property type="term" value="F:3-phosphoshikimate 1-carboxyvinyltransferase activity"/>
    <property type="evidence" value="ECO:0007669"/>
    <property type="project" value="UniProtKB-UniRule"/>
</dbReference>
<dbReference type="GO" id="GO:0008652">
    <property type="term" value="P:amino acid biosynthetic process"/>
    <property type="evidence" value="ECO:0007669"/>
    <property type="project" value="UniProtKB-KW"/>
</dbReference>
<dbReference type="GO" id="GO:0009073">
    <property type="term" value="P:aromatic amino acid family biosynthetic process"/>
    <property type="evidence" value="ECO:0007669"/>
    <property type="project" value="UniProtKB-KW"/>
</dbReference>
<dbReference type="GO" id="GO:0009423">
    <property type="term" value="P:chorismate biosynthetic process"/>
    <property type="evidence" value="ECO:0007669"/>
    <property type="project" value="UniProtKB-UniRule"/>
</dbReference>
<dbReference type="CDD" id="cd01556">
    <property type="entry name" value="EPSP_synthase"/>
    <property type="match status" value="1"/>
</dbReference>
<dbReference type="FunFam" id="3.65.10.10:FF:000015">
    <property type="entry name" value="3-phosphoshikimate 1-carboxyvinyltransferase"/>
    <property type="match status" value="1"/>
</dbReference>
<dbReference type="Gene3D" id="3.65.10.10">
    <property type="entry name" value="Enolpyruvate transferase domain"/>
    <property type="match status" value="2"/>
</dbReference>
<dbReference type="HAMAP" id="MF_00210">
    <property type="entry name" value="EPSP_synth"/>
    <property type="match status" value="1"/>
</dbReference>
<dbReference type="InterPro" id="IPR001986">
    <property type="entry name" value="Enolpyruvate_Tfrase_dom"/>
</dbReference>
<dbReference type="InterPro" id="IPR036968">
    <property type="entry name" value="Enolpyruvate_Tfrase_sf"/>
</dbReference>
<dbReference type="InterPro" id="IPR006264">
    <property type="entry name" value="EPSP_synthase"/>
</dbReference>
<dbReference type="InterPro" id="IPR023193">
    <property type="entry name" value="EPSP_synthase_CS"/>
</dbReference>
<dbReference type="InterPro" id="IPR013792">
    <property type="entry name" value="RNA3'P_cycl/enolpyr_Trfase_a/b"/>
</dbReference>
<dbReference type="NCBIfam" id="TIGR01356">
    <property type="entry name" value="aroA"/>
    <property type="match status" value="1"/>
</dbReference>
<dbReference type="PANTHER" id="PTHR21090">
    <property type="entry name" value="AROM/DEHYDROQUINATE SYNTHASE"/>
    <property type="match status" value="1"/>
</dbReference>
<dbReference type="PANTHER" id="PTHR21090:SF5">
    <property type="entry name" value="PENTAFUNCTIONAL AROM POLYPEPTIDE"/>
    <property type="match status" value="1"/>
</dbReference>
<dbReference type="Pfam" id="PF00275">
    <property type="entry name" value="EPSP_synthase"/>
    <property type="match status" value="1"/>
</dbReference>
<dbReference type="PIRSF" id="PIRSF000505">
    <property type="entry name" value="EPSPS"/>
    <property type="match status" value="1"/>
</dbReference>
<dbReference type="SUPFAM" id="SSF55205">
    <property type="entry name" value="EPT/RTPC-like"/>
    <property type="match status" value="1"/>
</dbReference>
<dbReference type="PROSITE" id="PS00104">
    <property type="entry name" value="EPSP_SYNTHASE_1"/>
    <property type="match status" value="1"/>
</dbReference>
<dbReference type="PROSITE" id="PS00885">
    <property type="entry name" value="EPSP_SYNTHASE_2"/>
    <property type="match status" value="1"/>
</dbReference>
<gene>
    <name evidence="1" type="primary">aroA</name>
    <name type="ordered locus">YN1551_1015</name>
</gene>
<protein>
    <recommendedName>
        <fullName evidence="1">3-phosphoshikimate 1-carboxyvinyltransferase</fullName>
        <ecNumber evidence="1">2.5.1.19</ecNumber>
    </recommendedName>
    <alternativeName>
        <fullName evidence="1">5-enolpyruvylshikimate-3-phosphate synthase</fullName>
        <shortName evidence="1">EPSP synthase</shortName>
        <shortName evidence="1">EPSPS</shortName>
    </alternativeName>
</protein>